<name>DAPD_RICRS</name>
<dbReference type="EC" id="2.3.1.117" evidence="1"/>
<dbReference type="EMBL" id="CP000848">
    <property type="protein sequence ID" value="ABV75858.1"/>
    <property type="molecule type" value="Genomic_DNA"/>
</dbReference>
<dbReference type="RefSeq" id="WP_012150463.1">
    <property type="nucleotide sequence ID" value="NZ_CP121767.1"/>
</dbReference>
<dbReference type="SMR" id="A8GR33"/>
<dbReference type="GeneID" id="79937034"/>
<dbReference type="KEGG" id="rri:A1G_01390"/>
<dbReference type="HOGENOM" id="CLU_050859_0_1_5"/>
<dbReference type="UniPathway" id="UPA00034">
    <property type="reaction ID" value="UER00019"/>
</dbReference>
<dbReference type="Proteomes" id="UP000006832">
    <property type="component" value="Chromosome"/>
</dbReference>
<dbReference type="GO" id="GO:0005737">
    <property type="term" value="C:cytoplasm"/>
    <property type="evidence" value="ECO:0007669"/>
    <property type="project" value="UniProtKB-SubCell"/>
</dbReference>
<dbReference type="GO" id="GO:0008666">
    <property type="term" value="F:2,3,4,5-tetrahydropyridine-2,6-dicarboxylate N-succinyltransferase activity"/>
    <property type="evidence" value="ECO:0007669"/>
    <property type="project" value="UniProtKB-UniRule"/>
</dbReference>
<dbReference type="GO" id="GO:0019877">
    <property type="term" value="P:diaminopimelate biosynthetic process"/>
    <property type="evidence" value="ECO:0007669"/>
    <property type="project" value="UniProtKB-UniRule"/>
</dbReference>
<dbReference type="GO" id="GO:0009089">
    <property type="term" value="P:lysine biosynthetic process via diaminopimelate"/>
    <property type="evidence" value="ECO:0007669"/>
    <property type="project" value="UniProtKB-UniRule"/>
</dbReference>
<dbReference type="CDD" id="cd03350">
    <property type="entry name" value="LbH_THP_succinylT"/>
    <property type="match status" value="1"/>
</dbReference>
<dbReference type="Gene3D" id="2.160.10.10">
    <property type="entry name" value="Hexapeptide repeat proteins"/>
    <property type="match status" value="1"/>
</dbReference>
<dbReference type="Gene3D" id="1.10.166.10">
    <property type="entry name" value="Tetrahydrodipicolinate-N-succinyltransferase, N-terminal domain"/>
    <property type="match status" value="1"/>
</dbReference>
<dbReference type="HAMAP" id="MF_00811">
    <property type="entry name" value="DapD"/>
    <property type="match status" value="1"/>
</dbReference>
<dbReference type="InterPro" id="IPR005664">
    <property type="entry name" value="DapD_Trfase_Hexpep_rpt_fam"/>
</dbReference>
<dbReference type="InterPro" id="IPR001451">
    <property type="entry name" value="Hexapep"/>
</dbReference>
<dbReference type="InterPro" id="IPR023180">
    <property type="entry name" value="THP_succinylTrfase_dom1"/>
</dbReference>
<dbReference type="InterPro" id="IPR037133">
    <property type="entry name" value="THP_succinylTrfase_N_sf"/>
</dbReference>
<dbReference type="InterPro" id="IPR050179">
    <property type="entry name" value="Trans_hexapeptide_repeat"/>
</dbReference>
<dbReference type="InterPro" id="IPR011004">
    <property type="entry name" value="Trimer_LpxA-like_sf"/>
</dbReference>
<dbReference type="NCBIfam" id="TIGR00965">
    <property type="entry name" value="dapD"/>
    <property type="match status" value="1"/>
</dbReference>
<dbReference type="NCBIfam" id="NF008808">
    <property type="entry name" value="PRK11830.1"/>
    <property type="match status" value="1"/>
</dbReference>
<dbReference type="PANTHER" id="PTHR43300:SF10">
    <property type="entry name" value="2,3,4,5-TETRAHYDROPYRIDINE-2,6-DICARBOXYLATE N-ACETYLTRANSFERASE"/>
    <property type="match status" value="1"/>
</dbReference>
<dbReference type="PANTHER" id="PTHR43300">
    <property type="entry name" value="ACETYLTRANSFERASE"/>
    <property type="match status" value="1"/>
</dbReference>
<dbReference type="Pfam" id="PF00132">
    <property type="entry name" value="Hexapep"/>
    <property type="match status" value="1"/>
</dbReference>
<dbReference type="Pfam" id="PF14602">
    <property type="entry name" value="Hexapep_2"/>
    <property type="match status" value="1"/>
</dbReference>
<dbReference type="Pfam" id="PF14805">
    <property type="entry name" value="THDPS_N_2"/>
    <property type="match status" value="1"/>
</dbReference>
<dbReference type="SUPFAM" id="SSF51161">
    <property type="entry name" value="Trimeric LpxA-like enzymes"/>
    <property type="match status" value="1"/>
</dbReference>
<proteinExistence type="inferred from homology"/>
<comment type="catalytic activity">
    <reaction evidence="1">
        <text>(S)-2,3,4,5-tetrahydrodipicolinate + succinyl-CoA + H2O = (S)-2-succinylamino-6-oxoheptanedioate + CoA</text>
        <dbReference type="Rhea" id="RHEA:17325"/>
        <dbReference type="ChEBI" id="CHEBI:15377"/>
        <dbReference type="ChEBI" id="CHEBI:15685"/>
        <dbReference type="ChEBI" id="CHEBI:16845"/>
        <dbReference type="ChEBI" id="CHEBI:57287"/>
        <dbReference type="ChEBI" id="CHEBI:57292"/>
        <dbReference type="EC" id="2.3.1.117"/>
    </reaction>
</comment>
<comment type="pathway">
    <text evidence="1">Amino-acid biosynthesis; L-lysine biosynthesis via DAP pathway; LL-2,6-diaminopimelate from (S)-tetrahydrodipicolinate (succinylase route): step 1/3.</text>
</comment>
<comment type="subunit">
    <text evidence="1">Homotrimer.</text>
</comment>
<comment type="subcellular location">
    <subcellularLocation>
        <location evidence="1">Cytoplasm</location>
    </subcellularLocation>
</comment>
<comment type="similarity">
    <text evidence="1">Belongs to the transferase hexapeptide repeat family.</text>
</comment>
<evidence type="ECO:0000255" key="1">
    <source>
        <dbReference type="HAMAP-Rule" id="MF_00811"/>
    </source>
</evidence>
<keyword id="KW-0012">Acyltransferase</keyword>
<keyword id="KW-0028">Amino-acid biosynthesis</keyword>
<keyword id="KW-0963">Cytoplasm</keyword>
<keyword id="KW-0220">Diaminopimelate biosynthesis</keyword>
<keyword id="KW-0457">Lysine biosynthesis</keyword>
<keyword id="KW-0677">Repeat</keyword>
<keyword id="KW-0808">Transferase</keyword>
<gene>
    <name evidence="1" type="primary">dapD</name>
    <name type="ordered locus">A1G_01390</name>
</gene>
<feature type="chain" id="PRO_1000047178" description="2,3,4,5-tetrahydropyridine-2,6-dicarboxylate N-succinyltransferase">
    <location>
        <begin position="1"/>
        <end position="274"/>
    </location>
</feature>
<feature type="binding site" evidence="1">
    <location>
        <position position="106"/>
    </location>
    <ligand>
        <name>substrate</name>
    </ligand>
</feature>
<feature type="binding site" evidence="1">
    <location>
        <position position="143"/>
    </location>
    <ligand>
        <name>substrate</name>
    </ligand>
</feature>
<reference key="1">
    <citation type="submission" date="2007-09" db="EMBL/GenBank/DDBJ databases">
        <title>Complete genome sequence of Rickettsia rickettsii.</title>
        <authorList>
            <person name="Madan A."/>
            <person name="Fahey J."/>
            <person name="Helton E."/>
            <person name="Ketteman M."/>
            <person name="Madan A."/>
            <person name="Rodrigues S."/>
            <person name="Sanchez A."/>
            <person name="Dasch G."/>
            <person name="Eremeeva M."/>
        </authorList>
    </citation>
    <scope>NUCLEOTIDE SEQUENCE [LARGE SCALE GENOMIC DNA]</scope>
    <source>
        <strain>Sheila Smith</strain>
    </source>
</reference>
<protein>
    <recommendedName>
        <fullName evidence="1">2,3,4,5-tetrahydropyridine-2,6-dicarboxylate N-succinyltransferase</fullName>
        <ecNumber evidence="1">2.3.1.117</ecNumber>
    </recommendedName>
    <alternativeName>
        <fullName evidence="1">Tetrahydrodipicolinate N-succinyltransferase</fullName>
        <shortName evidence="1">THDP succinyltransferase</shortName>
        <shortName evidence="1">THP succinyltransferase</shortName>
        <shortName evidence="1">Tetrahydropicolinate succinylase</shortName>
    </alternativeName>
</protein>
<organism>
    <name type="scientific">Rickettsia rickettsii (strain Sheila Smith)</name>
    <dbReference type="NCBI Taxonomy" id="392021"/>
    <lineage>
        <taxon>Bacteria</taxon>
        <taxon>Pseudomonadati</taxon>
        <taxon>Pseudomonadota</taxon>
        <taxon>Alphaproteobacteria</taxon>
        <taxon>Rickettsiales</taxon>
        <taxon>Rickettsiaceae</taxon>
        <taxon>Rickettsieae</taxon>
        <taxon>Rickettsia</taxon>
        <taxon>spotted fever group</taxon>
    </lineage>
</organism>
<sequence>MSSLIKEVEEAWQIKDKLLQDSSKLITLKQTLNDSIESLNQGTVRVCEKKENSWHVNEWVKKAILLYFITTESQLYNNNYNSWYDKVAPKFSADTDKNTFKEAAIRTVPGAIVRTGAYIAKNVVIMPSFINIGAYIDEGTMIDTWATIGSCAQIGKNCHISGGTGIGGVLEPLHAKPVIIEDNCFIGARSEIAEGVIVEEGAVISMGVFIGSSTKIVYRDTGEIIYGRIPAYSVVVPGVLPAKETGKPGLYCVVIVKQVDKTTRAKVRINDLLR</sequence>
<accession>A8GR33</accession>